<gene>
    <name evidence="1" type="primary">leuC</name>
    <name type="ordered locus">amb4067</name>
</gene>
<dbReference type="EC" id="4.2.1.33" evidence="1"/>
<dbReference type="EMBL" id="AP007255">
    <property type="protein sequence ID" value="BAE52871.1"/>
    <property type="molecule type" value="Genomic_DNA"/>
</dbReference>
<dbReference type="RefSeq" id="WP_011386418.1">
    <property type="nucleotide sequence ID" value="NC_007626.1"/>
</dbReference>
<dbReference type="SMR" id="Q2VZV4"/>
<dbReference type="STRING" id="342108.amb4067"/>
<dbReference type="KEGG" id="mag:amb4067"/>
<dbReference type="HOGENOM" id="CLU_006714_3_4_5"/>
<dbReference type="OrthoDB" id="9802769at2"/>
<dbReference type="UniPathway" id="UPA00048">
    <property type="reaction ID" value="UER00071"/>
</dbReference>
<dbReference type="Proteomes" id="UP000007058">
    <property type="component" value="Chromosome"/>
</dbReference>
<dbReference type="GO" id="GO:0003861">
    <property type="term" value="F:3-isopropylmalate dehydratase activity"/>
    <property type="evidence" value="ECO:0007669"/>
    <property type="project" value="UniProtKB-UniRule"/>
</dbReference>
<dbReference type="GO" id="GO:0051539">
    <property type="term" value="F:4 iron, 4 sulfur cluster binding"/>
    <property type="evidence" value="ECO:0007669"/>
    <property type="project" value="UniProtKB-KW"/>
</dbReference>
<dbReference type="GO" id="GO:0046872">
    <property type="term" value="F:metal ion binding"/>
    <property type="evidence" value="ECO:0007669"/>
    <property type="project" value="UniProtKB-KW"/>
</dbReference>
<dbReference type="GO" id="GO:0009098">
    <property type="term" value="P:L-leucine biosynthetic process"/>
    <property type="evidence" value="ECO:0007669"/>
    <property type="project" value="UniProtKB-UniRule"/>
</dbReference>
<dbReference type="CDD" id="cd01583">
    <property type="entry name" value="IPMI"/>
    <property type="match status" value="1"/>
</dbReference>
<dbReference type="FunFam" id="3.30.499.10:FF:000006">
    <property type="entry name" value="3-isopropylmalate dehydratase large subunit"/>
    <property type="match status" value="1"/>
</dbReference>
<dbReference type="FunFam" id="3.30.499.10:FF:000007">
    <property type="entry name" value="3-isopropylmalate dehydratase large subunit"/>
    <property type="match status" value="1"/>
</dbReference>
<dbReference type="Gene3D" id="3.30.499.10">
    <property type="entry name" value="Aconitase, domain 3"/>
    <property type="match status" value="2"/>
</dbReference>
<dbReference type="HAMAP" id="MF_01026">
    <property type="entry name" value="LeuC_type1"/>
    <property type="match status" value="1"/>
</dbReference>
<dbReference type="InterPro" id="IPR004430">
    <property type="entry name" value="3-IsopropMal_deHydase_lsu"/>
</dbReference>
<dbReference type="InterPro" id="IPR015931">
    <property type="entry name" value="Acnase/IPM_dHydase_lsu_aba_1/3"/>
</dbReference>
<dbReference type="InterPro" id="IPR001030">
    <property type="entry name" value="Acoase/IPM_deHydtase_lsu_aba"/>
</dbReference>
<dbReference type="InterPro" id="IPR018136">
    <property type="entry name" value="Aconitase_4Fe-4S_BS"/>
</dbReference>
<dbReference type="InterPro" id="IPR036008">
    <property type="entry name" value="Aconitase_4Fe-4S_dom"/>
</dbReference>
<dbReference type="InterPro" id="IPR050067">
    <property type="entry name" value="IPM_dehydratase_rel_enz"/>
</dbReference>
<dbReference type="InterPro" id="IPR033941">
    <property type="entry name" value="IPMI_cat"/>
</dbReference>
<dbReference type="NCBIfam" id="TIGR00170">
    <property type="entry name" value="leuC"/>
    <property type="match status" value="1"/>
</dbReference>
<dbReference type="NCBIfam" id="NF004016">
    <property type="entry name" value="PRK05478.1"/>
    <property type="match status" value="1"/>
</dbReference>
<dbReference type="NCBIfam" id="NF009116">
    <property type="entry name" value="PRK12466.1"/>
    <property type="match status" value="1"/>
</dbReference>
<dbReference type="PANTHER" id="PTHR43822:SF9">
    <property type="entry name" value="3-ISOPROPYLMALATE DEHYDRATASE"/>
    <property type="match status" value="1"/>
</dbReference>
<dbReference type="PANTHER" id="PTHR43822">
    <property type="entry name" value="HOMOACONITASE, MITOCHONDRIAL-RELATED"/>
    <property type="match status" value="1"/>
</dbReference>
<dbReference type="Pfam" id="PF00330">
    <property type="entry name" value="Aconitase"/>
    <property type="match status" value="1"/>
</dbReference>
<dbReference type="PRINTS" id="PR00415">
    <property type="entry name" value="ACONITASE"/>
</dbReference>
<dbReference type="SUPFAM" id="SSF53732">
    <property type="entry name" value="Aconitase iron-sulfur domain"/>
    <property type="match status" value="1"/>
</dbReference>
<dbReference type="PROSITE" id="PS01244">
    <property type="entry name" value="ACONITASE_2"/>
    <property type="match status" value="1"/>
</dbReference>
<accession>Q2VZV4</accession>
<protein>
    <recommendedName>
        <fullName evidence="1">3-isopropylmalate dehydratase large subunit</fullName>
        <ecNumber evidence="1">4.2.1.33</ecNumber>
    </recommendedName>
    <alternativeName>
        <fullName evidence="1">Alpha-IPM isomerase</fullName>
        <shortName evidence="1">IPMI</shortName>
    </alternativeName>
    <alternativeName>
        <fullName evidence="1">Isopropylmalate isomerase</fullName>
    </alternativeName>
</protein>
<evidence type="ECO:0000255" key="1">
    <source>
        <dbReference type="HAMAP-Rule" id="MF_01026"/>
    </source>
</evidence>
<evidence type="ECO:0000256" key="2">
    <source>
        <dbReference type="SAM" id="MobiDB-lite"/>
    </source>
</evidence>
<comment type="function">
    <text evidence="1">Catalyzes the isomerization between 2-isopropylmalate and 3-isopropylmalate, via the formation of 2-isopropylmaleate.</text>
</comment>
<comment type="catalytic activity">
    <reaction evidence="1">
        <text>(2R,3S)-3-isopropylmalate = (2S)-2-isopropylmalate</text>
        <dbReference type="Rhea" id="RHEA:32287"/>
        <dbReference type="ChEBI" id="CHEBI:1178"/>
        <dbReference type="ChEBI" id="CHEBI:35121"/>
        <dbReference type="EC" id="4.2.1.33"/>
    </reaction>
</comment>
<comment type="cofactor">
    <cofactor evidence="1">
        <name>[4Fe-4S] cluster</name>
        <dbReference type="ChEBI" id="CHEBI:49883"/>
    </cofactor>
    <text evidence="1">Binds 1 [4Fe-4S] cluster per subunit.</text>
</comment>
<comment type="pathway">
    <text evidence="1">Amino-acid biosynthesis; L-leucine biosynthesis; L-leucine from 3-methyl-2-oxobutanoate: step 2/4.</text>
</comment>
<comment type="subunit">
    <text evidence="1">Heterodimer of LeuC and LeuD.</text>
</comment>
<comment type="similarity">
    <text evidence="1">Belongs to the aconitase/IPM isomerase family. LeuC type 1 subfamily.</text>
</comment>
<proteinExistence type="inferred from homology"/>
<reference key="1">
    <citation type="journal article" date="2005" name="DNA Res.">
        <title>Complete genome sequence of the facultative anaerobic magnetotactic bacterium Magnetospirillum sp. strain AMB-1.</title>
        <authorList>
            <person name="Matsunaga T."/>
            <person name="Okamura Y."/>
            <person name="Fukuda Y."/>
            <person name="Wahyudi A.T."/>
            <person name="Murase Y."/>
            <person name="Takeyama H."/>
        </authorList>
    </citation>
    <scope>NUCLEOTIDE SEQUENCE [LARGE SCALE GENOMIC DNA]</scope>
    <source>
        <strain>ATCC 700264 / AMB-1</strain>
    </source>
</reference>
<keyword id="KW-0004">4Fe-4S</keyword>
<keyword id="KW-0028">Amino-acid biosynthesis</keyword>
<keyword id="KW-0100">Branched-chain amino acid biosynthesis</keyword>
<keyword id="KW-0408">Iron</keyword>
<keyword id="KW-0411">Iron-sulfur</keyword>
<keyword id="KW-0432">Leucine biosynthesis</keyword>
<keyword id="KW-0456">Lyase</keyword>
<keyword id="KW-0479">Metal-binding</keyword>
<organism>
    <name type="scientific">Paramagnetospirillum magneticum (strain ATCC 700264 / AMB-1)</name>
    <name type="common">Magnetospirillum magneticum</name>
    <dbReference type="NCBI Taxonomy" id="342108"/>
    <lineage>
        <taxon>Bacteria</taxon>
        <taxon>Pseudomonadati</taxon>
        <taxon>Pseudomonadota</taxon>
        <taxon>Alphaproteobacteria</taxon>
        <taxon>Rhodospirillales</taxon>
        <taxon>Magnetospirillaceae</taxon>
        <taxon>Paramagnetospirillum</taxon>
    </lineage>
</organism>
<name>LEUC_PARM1</name>
<feature type="chain" id="PRO_0000319817" description="3-isopropylmalate dehydratase large subunit">
    <location>
        <begin position="1"/>
        <end position="467"/>
    </location>
</feature>
<feature type="region of interest" description="Disordered" evidence="2">
    <location>
        <begin position="422"/>
        <end position="443"/>
    </location>
</feature>
<feature type="binding site" evidence="1">
    <location>
        <position position="349"/>
    </location>
    <ligand>
        <name>[4Fe-4S] cluster</name>
        <dbReference type="ChEBI" id="CHEBI:49883"/>
    </ligand>
</feature>
<feature type="binding site" evidence="1">
    <location>
        <position position="409"/>
    </location>
    <ligand>
        <name>[4Fe-4S] cluster</name>
        <dbReference type="ChEBI" id="CHEBI:49883"/>
    </ligand>
</feature>
<feature type="binding site" evidence="1">
    <location>
        <position position="412"/>
    </location>
    <ligand>
        <name>[4Fe-4S] cluster</name>
        <dbReference type="ChEBI" id="CHEBI:49883"/>
    </ligand>
</feature>
<sequence length="467" mass="49880">MAKLRTLFDKIWDAHLVDVQDDGTCLIYIDRHMVHEVTSPQAFEGLEMSGRKVRHPELTLAVADHNVPTTDRSKGIENEESRIQVETLEANAKKFGVEYLRMDDIRQGVVHIVGPEQGFTLPGTTIVCGDSHTATHGAFGSLAFGIGTSEVEHVLATQTLVQKPAKNMRITVTGKPGPGVTAKDIVLAIIGKIGTAGGTGYVVEFAGEAIRDLSMEGRMTVCNMTIEAGARAGLVAPDEKTFAYIAGKPRSPKGAAFEAAVSYWKTLFTDEGAHFDAEVTLDASTLVPQITWGTSPEDVIAITGTVPNPADIKDEAKRKAVERSLDYMGLTAGMKATDIAIDVVFIGSCTNGRIEDFRAAAEIFKGRKVAASVQALIVPGSGLVKEQAEQEGLDKIFIEAGAEWREPGCSMCLAMNADQLKPGQRSASTSNRNFEGRQGRGGRTHLVSPAMAAAAAITGKLTDVRSL</sequence>